<dbReference type="EMBL" id="AF391541">
    <property type="protein sequence ID" value="AAK83357.1"/>
    <property type="molecule type" value="Genomic_RNA"/>
</dbReference>
<dbReference type="RefSeq" id="NP_150078.1">
    <property type="nucleotide sequence ID" value="NC_003045.1"/>
</dbReference>
<dbReference type="KEGG" id="vg:1724648"/>
<dbReference type="Proteomes" id="UP000008570">
    <property type="component" value="Segment"/>
</dbReference>
<dbReference type="InterPro" id="IPR009314">
    <property type="entry name" value="Corona_NS1"/>
</dbReference>
<dbReference type="Pfam" id="PF06145">
    <property type="entry name" value="Corona_NS1"/>
    <property type="match status" value="1"/>
</dbReference>
<organism>
    <name type="scientific">Bovine coronavirus (strain 98TXSF-110-ENT)</name>
    <name type="common">BCoV-ENT</name>
    <name type="synonym">BCV</name>
    <dbReference type="NCBI Taxonomy" id="233262"/>
    <lineage>
        <taxon>Viruses</taxon>
        <taxon>Riboviria</taxon>
        <taxon>Orthornavirae</taxon>
        <taxon>Pisuviricota</taxon>
        <taxon>Pisoniviricetes</taxon>
        <taxon>Nidovirales</taxon>
        <taxon>Cornidovirineae</taxon>
        <taxon>Coronaviridae</taxon>
        <taxon>Orthocoronavirinae</taxon>
        <taxon>Betacoronavirus</taxon>
        <taxon>Embecovirus</taxon>
        <taxon>Betacoronavirus 1</taxon>
    </lineage>
</organism>
<feature type="chain" id="PRO_0000283939" description="Truncated non-structural protein of 4.9 kDa">
    <location>
        <begin position="1"/>
        <end position="29"/>
    </location>
</feature>
<protein>
    <recommendedName>
        <fullName>Truncated non-structural protein of 4.9 kDa</fullName>
        <shortName>Truncated ns4.9</shortName>
    </recommendedName>
    <alternativeName>
        <fullName>Truncated 4.9 kDa accessory protein</fullName>
    </alternativeName>
</protein>
<organismHost>
    <name type="scientific">Bos taurus</name>
    <name type="common">Bovine</name>
    <dbReference type="NCBI Taxonomy" id="9913"/>
</organismHost>
<evidence type="ECO:0000305" key="1"/>
<name>NS49_CVBEN</name>
<gene>
    <name type="ORF">4a</name>
</gene>
<proteinExistence type="inferred from homology"/>
<accession>Q91A25</accession>
<comment type="similarity">
    <text evidence="1">Belongs to the coronaviruses ns4.9 protein family.</text>
</comment>
<reference key="1">
    <citation type="journal article" date="2001" name="J. Gen. Virol.">
        <title>Comparison of genomic and predicted amino acid sequences of respiratory and enteric bovine coronaviruses isolated from the same animal with fatal shipping pneumonia.</title>
        <authorList>
            <person name="Chouljenko V.N."/>
            <person name="Lin X.Q."/>
            <person name="Storz J."/>
            <person name="Kousoulas K.G."/>
            <person name="Gorbalenya A.E."/>
        </authorList>
    </citation>
    <scope>NUCLEOTIDE SEQUENCE [GENOMIC RNA]</scope>
</reference>
<sequence length="29" mass="3388">MKTKFVFDLLTPDDILHPSNHVNLIIRPI</sequence>